<comment type="function">
    <text evidence="5 6 7 8 10">DNA annealing helicase and endonuclease required to maintain genome stability at stalled or collapsed replication forks by facilitating fork restart and limiting inappropriate recombination that could occur during template switching events (PubMed:21078962, PubMed:22704558, PubMed:22705370, PubMed:22759634, PubMed:26884333). Recruited to the sites of stalled DNA replication by polyubiquitinated PCNA and acts as a structure-specific endonuclease that cleaves the replication fork D-loop intermediate, generating an accessible 3'-OH group in the template of the leading strand, which is amenable to extension by DNA polymerase (PubMed:22759634). In addition to endonuclease activity, also catalyzes the fork regression via annealing helicase activity in order to prevent disintegration of the replication fork and the formation of double-strand breaks (PubMed:22704558, PubMed:22705370).</text>
</comment>
<comment type="subunit">
    <text evidence="6 7 8">Interacts (via PIP-box and RanBP2-type zinc finger) with PCNA (when PCNA is polyubiquitinated via 'Lys-63'-linked polyubiquitin).</text>
</comment>
<comment type="interaction">
    <interactant intactId="EBI-13954615">
        <id>Q5FWF4</id>
    </interactant>
    <interactant intactId="EBI-358311">
        <id>P12004</id>
        <label>PCNA</label>
    </interactant>
    <organismsDiffer>false</organismsDiffer>
    <experiments>8</experiments>
</comment>
<comment type="subcellular location">
    <subcellularLocation>
        <location evidence="6 7 8">Nucleus</location>
    </subcellularLocation>
    <subcellularLocation>
        <location evidence="6 7 8">Chromosome</location>
    </subcellularLocation>
    <text evidence="6 7 8">Following DNA damage, recruited to sites of DNA damage and stalled replication forks by polyubiquitinated PCNA (PubMed:22704558, PubMed:22705370, PubMed:22759634).</text>
</comment>
<comment type="alternative products">
    <event type="alternative splicing"/>
    <isoform>
        <id>Q5FWF4-1</id>
        <name>1</name>
        <sequence type="displayed"/>
    </isoform>
    <isoform>
        <id>Q5FWF4-2</id>
        <name>2</name>
        <sequence type="described" ref="VSP_023138 VSP_023139 VSP_023140"/>
    </isoform>
    <isoform>
        <id>Q5FWF4-3</id>
        <name>3</name>
        <sequence type="described" ref="VSP_023139"/>
    </isoform>
    <isoform>
        <id>Q5FWF4-4</id>
        <name>4</name>
        <sequence type="described" ref="VSP_044175 VSP_023139"/>
    </isoform>
    <isoform>
        <id>Q5FWF4-5</id>
        <name>5</name>
        <sequence type="described" ref="VSP_044176 VSP_044177 VSP_044178"/>
    </isoform>
</comment>
<comment type="domain">
    <text evidence="6 7 8">The PIP-box mediates the interaction with PCNA, while the RanBP2-type zinc finger mediates binding to 'Lys-63'-linked polyubiquitin (PubMed:22704558, PubMed:22705370, PubMed:22759634).</text>
</comment>
<comment type="PTM">
    <text evidence="9 11">(Microbial infection) Methylation at Cys-630 by enteropathogenic E.coli protein NleE or S.flexneri protein OspZ: methylation disrupts ability to bind 'Lys-63'-linked ubiquitin.</text>
</comment>
<comment type="miscellaneous">
    <text evidence="19">In contrast to classical helicases that unwing DNA, annealing helicases rewind it.</text>
</comment>
<comment type="similarity">
    <text evidence="18">Belongs to the SNF2/RAD54 helicase family.</text>
</comment>
<comment type="sequence caution" evidence="18">
    <conflict type="erroneous gene model prediction">
        <sequence resource="EMBL-CDS" id="AAX93066"/>
    </conflict>
</comment>
<comment type="sequence caution" evidence="18">
    <conflict type="erroneous initiation">
        <sequence resource="EMBL-CDS" id="BAG54763"/>
    </conflict>
    <text>Truncated N-terminus.</text>
</comment>
<comment type="sequence caution" evidence="18">
    <conflict type="erroneous initiation">
        <sequence resource="EMBL-CDS" id="BAG65387"/>
    </conflict>
    <text>Truncated N-terminus.</text>
</comment>
<comment type="sequence caution" evidence="18">
    <conflict type="erroneous gene model prediction">
        <sequence resource="EMBL-CDS" id="EAX11631"/>
    </conflict>
</comment>
<comment type="sequence caution" evidence="18">
    <conflict type="erroneous gene model prediction">
        <sequence resource="EMBL-CDS" id="EAX11633"/>
    </conflict>
</comment>
<evidence type="ECO:0000255" key="1">
    <source>
        <dbReference type="PROSITE-ProRule" id="PRU00322"/>
    </source>
</evidence>
<evidence type="ECO:0000255" key="2">
    <source>
        <dbReference type="PROSITE-ProRule" id="PRU00541"/>
    </source>
</evidence>
<evidence type="ECO:0000255" key="3">
    <source>
        <dbReference type="PROSITE-ProRule" id="PRU00542"/>
    </source>
</evidence>
<evidence type="ECO:0000256" key="4">
    <source>
        <dbReference type="SAM" id="MobiDB-lite"/>
    </source>
</evidence>
<evidence type="ECO:0000269" key="5">
    <source>
    </source>
</evidence>
<evidence type="ECO:0000269" key="6">
    <source>
    </source>
</evidence>
<evidence type="ECO:0000269" key="7">
    <source>
    </source>
</evidence>
<evidence type="ECO:0000269" key="8">
    <source>
    </source>
</evidence>
<evidence type="ECO:0000269" key="9">
    <source>
    </source>
</evidence>
<evidence type="ECO:0000269" key="10">
    <source>
    </source>
</evidence>
<evidence type="ECO:0000269" key="11">
    <source>
    </source>
</evidence>
<evidence type="ECO:0000303" key="12">
    <source>
    </source>
</evidence>
<evidence type="ECO:0000303" key="13">
    <source>
    </source>
</evidence>
<evidence type="ECO:0000303" key="14">
    <source>
    </source>
</evidence>
<evidence type="ECO:0000303" key="15">
    <source>
    </source>
</evidence>
<evidence type="ECO:0000303" key="16">
    <source>
    </source>
</evidence>
<evidence type="ECO:0000303" key="17">
    <source>
    </source>
</evidence>
<evidence type="ECO:0000305" key="18"/>
<evidence type="ECO:0000305" key="19">
    <source>
    </source>
</evidence>
<evidence type="ECO:0000312" key="20">
    <source>
        <dbReference type="HGNC" id="HGNC:25249"/>
    </source>
</evidence>
<evidence type="ECO:0007744" key="21">
    <source>
    </source>
</evidence>
<evidence type="ECO:0007829" key="22">
    <source>
        <dbReference type="PDB" id="5MKW"/>
    </source>
</evidence>
<evidence type="ECO:0007829" key="23">
    <source>
        <dbReference type="PDB" id="5MLO"/>
    </source>
</evidence>
<evidence type="ECO:0007829" key="24">
    <source>
        <dbReference type="PDB" id="5YD8"/>
    </source>
</evidence>
<sequence>MPRVHNIKKSLTPHISCVTNESDNLLDFLPDRLRAKLLPFQKDGIIFALKRNGRCMVADEMGLGKTIQAIGITYFYKEEWPLLIVVPSSLRYPWTEEIEKWIPELSPEEINVIQNKTDVRRMSTSKVTVLGYGLLTADAKTLIDALNNQNFKVVIVDESHYMKSRNATRSRILLPIVQKARRAILLTGTPALGRPEELFMQIEALFPQKFGRWTDYAKRYCNAHIRYFGKRPQWDCRGASNLNELHQLLSDIMIRRLKTEVLTQLPPKVRQRIPFDLPSAAAKELNTSFEEWEKIMRTPNSGAMETVMGLITRMFKQTAIAKAGAVKDYIKMMLQNDSLKFLVFAHHLSMLQACTEAVIENKTRYIRIDGSVSSSERIHLVNQFQKDPDTRVAILSIQAAGQGLTFTAASHVVFAELYWDPGHIKQAEDRAHRIGQCSSVNIHYLIANGTLDTLMWGMLNRKAQVTGSTLNGRKEKIQAEEGDKEKWDFLQFAEAWTPNDSSEELRKEALFTHFEKEKQHDIRSFFVPQPKKRQLMTSCDESKRFREENTVVSSDPTKTAARDIIDYESDVEPETKRLKLAASEDHCSPSEETPSQSKQIRTPLVESVQEAKAQLTTPAFPVEGWQCSLCTYINNSELPYCEMCETPQGSAVMQIDSLNHIQDKNEKDDSQKDTSKKVQTISDCEKQALAQSEPGQLADSKEETPKIEKEDGLTSQPGNEQWKSSDTLPVYDTLMFCASRNTDRIHIYTKDGKQMSCNFIPLDIKLDLWEDLPASFQLKQYRSLILRFVREWSSLTAMKQRIIRKSGQLFCSPILALEEITKQQTKQNCTKRYITKEDVAVASMDKVKNVGGHVRLITKESRPRDPFTKKLLEDGACVPFLNPYTVQADLTVKPSTSKGYLQAVDNEGNPLCLRCQQPTCQTKQACKANSWDSRFCSLKCQEEFWIRSNNSYLRAKVFETEHGVCQLCNVNAQELFLRLRDAPKSQRKNLLYATWTSKLPLEQLNEMIRNPGEGHFWQVDHIKPVYGGGGQCSLDNLQTLCTVCHKERTARQAKERSQVRRQSLASKHGSDITRFLVKK</sequence>
<feature type="chain" id="PRO_0000278182" description="DNA annealing helicase and endonuclease ZRANB3">
    <location>
        <begin position="1"/>
        <end position="1079"/>
    </location>
</feature>
<feature type="domain" description="Helicase ATP-binding" evidence="2">
    <location>
        <begin position="46"/>
        <end position="208"/>
    </location>
</feature>
<feature type="domain" description="Helicase C-terminal" evidence="3">
    <location>
        <begin position="325"/>
        <end position="481"/>
    </location>
</feature>
<feature type="domain" description="HNH">
    <location>
        <begin position="1011"/>
        <end position="1051"/>
    </location>
</feature>
<feature type="zinc finger region" description="RanBP2-type" evidence="1">
    <location>
        <begin position="621"/>
        <end position="650"/>
    </location>
</feature>
<feature type="region of interest" description="DNA annealing helicase activity">
    <location>
        <begin position="46"/>
        <end position="481"/>
    </location>
</feature>
<feature type="region of interest" description="Disordered" evidence="4">
    <location>
        <begin position="582"/>
        <end position="601"/>
    </location>
</feature>
<feature type="region of interest" description="Disordered" evidence="4">
    <location>
        <begin position="689"/>
        <end position="725"/>
    </location>
</feature>
<feature type="region of interest" description="Endonuclease activity">
    <location>
        <begin position="1011"/>
        <end position="1079"/>
    </location>
</feature>
<feature type="short sequence motif" description="DEAH box">
    <location>
        <begin position="157"/>
        <end position="160"/>
    </location>
</feature>
<feature type="short sequence motif" description="PIP-box">
    <location>
        <begin position="519"/>
        <end position="526"/>
    </location>
</feature>
<feature type="short sequence motif" description="APIM motif">
    <location>
        <begin position="1074"/>
        <end position="1078"/>
    </location>
</feature>
<feature type="compositionally biased region" description="Polar residues" evidence="4">
    <location>
        <begin position="590"/>
        <end position="600"/>
    </location>
</feature>
<feature type="compositionally biased region" description="Basic and acidic residues" evidence="4">
    <location>
        <begin position="699"/>
        <end position="712"/>
    </location>
</feature>
<feature type="compositionally biased region" description="Polar residues" evidence="4">
    <location>
        <begin position="713"/>
        <end position="725"/>
    </location>
</feature>
<feature type="binding site" evidence="2">
    <location>
        <begin position="59"/>
        <end position="66"/>
    </location>
    <ligand>
        <name>ATP</name>
        <dbReference type="ChEBI" id="CHEBI:30616"/>
    </ligand>
</feature>
<feature type="modified residue" description="Phosphoserine" evidence="21">
    <location>
        <position position="569"/>
    </location>
</feature>
<feature type="modified residue" description="(Microbial infection) S-methylcysteine" evidence="9">
    <location>
        <position position="630"/>
    </location>
</feature>
<feature type="splice variant" id="VSP_044175" description="In isoform 4." evidence="14">
    <location>
        <begin position="1"/>
        <end position="642"/>
    </location>
</feature>
<feature type="splice variant" id="VSP_023138" description="In isoform 2." evidence="12">
    <location>
        <begin position="1"/>
        <end position="535"/>
    </location>
</feature>
<feature type="splice variant" id="VSP_044176" description="In isoform 5." evidence="13">
    <location>
        <begin position="1"/>
        <end position="60"/>
    </location>
</feature>
<feature type="splice variant" id="VSP_044177" description="In isoform 5." evidence="13">
    <original>GLTFTAASHVVFAELYWDPGHIKQAE</original>
    <variation>DLYDKVAWGKRTLVSGLFMECFCFVP</variation>
    <location>
        <begin position="403"/>
        <end position="428"/>
    </location>
</feature>
<feature type="splice variant" id="VSP_044178" description="In isoform 5." evidence="13">
    <location>
        <begin position="429"/>
        <end position="1079"/>
    </location>
</feature>
<feature type="splice variant" id="VSP_023139" description="In isoform 2, isoform 3 and isoform 4." evidence="12 14 15">
    <location>
        <begin position="718"/>
        <end position="719"/>
    </location>
</feature>
<feature type="splice variant" id="VSP_023140" description="In isoform 2." evidence="12">
    <original>VKK</original>
    <variation>ETSKLHESHKVTGAEQGLQVSGLPDSAAPEGGAAHTNDQRRCQRMKQPLTEVQILSHSS</variation>
    <location>
        <begin position="1077"/>
        <end position="1079"/>
    </location>
</feature>
<feature type="sequence variant" id="VAR_030671" description="In dbSNP:rs935615.">
    <original>E</original>
    <variation>K</variation>
    <location>
        <position position="541"/>
    </location>
</feature>
<feature type="sequence variant" id="VAR_030672" description="In dbSNP:rs7608121.">
    <original>R</original>
    <variation>Q</variation>
    <location>
        <position position="546"/>
    </location>
</feature>
<feature type="sequence variant" id="VAR_061237" description="In dbSNP:rs59900519.">
    <original>E</original>
    <variation>V</variation>
    <location>
        <position position="637"/>
    </location>
</feature>
<feature type="mutagenesis site" description="Abolishes ATPase activity. Abolishes endonuclease activity; when associated with A-1021." evidence="8">
    <original>K</original>
    <variation>R</variation>
    <location>
        <position position="65"/>
    </location>
</feature>
<feature type="mutagenesis site" description="Abolishes fork regression activity." evidence="6">
    <original>DE</original>
    <variation>AA</variation>
    <location>
        <begin position="157"/>
        <end position="158"/>
    </location>
</feature>
<feature type="mutagenesis site" description="Loss of DNA-dependent ATPase activity." evidence="10">
    <original>K</original>
    <variation>D</variation>
    <location>
        <position position="163"/>
    </location>
</feature>
<feature type="mutagenesis site" description="Abolishes interaction with PCNA; when associated with A-522; 525-A-A-526 and A-1075. Abolishes interaction with PCNA; when associated with A-525." evidence="6 7 8">
    <original>Q</original>
    <variation>A</variation>
    <location>
        <position position="519"/>
    </location>
</feature>
<feature type="mutagenesis site" description="Abolishes interaction with PCNA; when associated with A-519; 525-A-A-526 and A-1075." evidence="6">
    <original>I</original>
    <variation>A</variation>
    <location>
        <position position="522"/>
    </location>
</feature>
<feature type="mutagenesis site" description="Abolishes interaction with PCNA; when associated with A-519; A-522 and A-1075." evidence="6 8">
    <original>FF</original>
    <variation>AA</variation>
    <location>
        <begin position="525"/>
        <end position="526"/>
    </location>
</feature>
<feature type="mutagenesis site" description="Abolishes interaction with PCNA; when associated with A-519." evidence="7">
    <original>F</original>
    <variation>A</variation>
    <location>
        <position position="525"/>
    </location>
</feature>
<feature type="mutagenesis site" description="Abolishes interaction with 'Lys-63'-linked polyubiquitin." evidence="8">
    <original>W</original>
    <variation>A</variation>
    <location>
        <position position="625"/>
    </location>
</feature>
<feature type="mutagenesis site" description="Abolishes interaction with 'Lys-63'-linked polyubiquitin.">
    <original>TY</original>
    <variation>AA</variation>
    <location>
        <begin position="631"/>
        <end position="632"/>
    </location>
</feature>
<feature type="mutagenesis site" description="Impaired interaction with 'Lys-63'-linked polyubiquitin." evidence="6 8">
    <original>T</original>
    <variation>A</variation>
    <location>
        <position position="631"/>
    </location>
</feature>
<feature type="mutagenesis site" description="Abolishes interaction with 'Lys-63'-linked polyubiquitin." evidence="8">
    <original>Y</original>
    <variation>A</variation>
    <location>
        <position position="632"/>
    </location>
</feature>
<feature type="mutagenesis site" description="Abolishes interaction with 'Lys-63'-linked polyubiquitin." evidence="8">
    <original>N</original>
    <variation>A</variation>
    <location>
        <position position="634"/>
    </location>
</feature>
<feature type="mutagenesis site" description="Impaired interaction with polyubiquitin." evidence="8">
    <original>M</original>
    <variation>A</variation>
    <location>
        <position position="643"/>
    </location>
</feature>
<feature type="mutagenesis site" description="Loss of DNA-binding, DNA-dependent ATPase and nuclease activities." evidence="10">
    <original>LDI</original>
    <variation>AAA</variation>
    <location>
        <begin position="762"/>
        <end position="764"/>
    </location>
</feature>
<feature type="mutagenesis site" description="Loss of DNA-dependent ATPase activity." evidence="10">
    <original>WSS</original>
    <variation>AAA</variation>
    <location>
        <begin position="792"/>
        <end position="794"/>
    </location>
</feature>
<feature type="mutagenesis site" description="Does not affect endonuclease. Abolishes endonuclease activity; when associated with R-65." evidence="8">
    <original>H</original>
    <variation>A</variation>
    <location>
        <position position="1021"/>
    </location>
</feature>
<feature type="mutagenesis site" description="Abolishes interaction with PCNA; when associated with A-519; A-522 and 525-A-A-526." evidence="6">
    <original>F</original>
    <variation>A</variation>
    <location>
        <position position="1075"/>
    </location>
</feature>
<feature type="sequence conflict" description="In Ref. 2; BAC04536." evidence="18" ref="2">
    <original>I</original>
    <variation>T</variation>
    <location>
        <position position="366"/>
    </location>
</feature>
<feature type="sequence conflict" description="In Ref. 2; BAG65387." evidence="18" ref="2">
    <original>S</original>
    <variation>I</variation>
    <location>
        <position position="700"/>
    </location>
</feature>
<feature type="sequence conflict" description="In Ref. 2; BAG54763." evidence="18" ref="2">
    <original>V</original>
    <variation>A</variation>
    <location>
        <position position="847"/>
    </location>
</feature>
<feature type="helix" evidence="23">
    <location>
        <begin position="522"/>
        <end position="524"/>
    </location>
</feature>
<feature type="helix" evidence="22">
    <location>
        <begin position="950"/>
        <end position="961"/>
    </location>
</feature>
<feature type="turn" evidence="22">
    <location>
        <begin position="966"/>
        <end position="968"/>
    </location>
</feature>
<feature type="helix" evidence="22">
    <location>
        <begin position="972"/>
        <end position="981"/>
    </location>
</feature>
<feature type="helix" evidence="22">
    <location>
        <begin position="984"/>
        <end position="992"/>
    </location>
</feature>
<feature type="helix" evidence="22">
    <location>
        <begin position="995"/>
        <end position="998"/>
    </location>
</feature>
<feature type="helix" evidence="22">
    <location>
        <begin position="1001"/>
        <end position="1009"/>
    </location>
</feature>
<feature type="helix" evidence="22">
    <location>
        <begin position="1013"/>
        <end position="1015"/>
    </location>
</feature>
<feature type="strand" evidence="22">
    <location>
        <begin position="1017"/>
        <end position="1023"/>
    </location>
</feature>
<feature type="helix" evidence="22">
    <location>
        <begin position="1034"/>
        <end position="1036"/>
    </location>
</feature>
<feature type="strand" evidence="22">
    <location>
        <begin position="1037"/>
        <end position="1041"/>
    </location>
</feature>
<feature type="helix" evidence="22">
    <location>
        <begin position="1042"/>
        <end position="1063"/>
    </location>
</feature>
<feature type="helix" evidence="24">
    <location>
        <begin position="1073"/>
        <end position="1075"/>
    </location>
</feature>
<protein>
    <recommendedName>
        <fullName evidence="18">DNA annealing helicase and endonuclease ZRANB3</fullName>
    </recommendedName>
    <alternativeName>
        <fullName evidence="16">Annealing helicase 2</fullName>
        <shortName evidence="16">AH2</shortName>
    </alternativeName>
    <alternativeName>
        <fullName evidence="18">Zinc finger Ran-binding domain-containing protein 3</fullName>
    </alternativeName>
    <domain>
        <recommendedName>
            <fullName evidence="18">DNA annealing helicase ZRANB3</fullName>
            <ecNumber evidence="6 7">3.6.4.-</ecNumber>
        </recommendedName>
    </domain>
    <domain>
        <recommendedName>
            <fullName evidence="18">Endonuclease ZRANB3</fullName>
            <ecNumber evidence="8">3.1.-.-</ecNumber>
        </recommendedName>
    </domain>
</protein>
<gene>
    <name evidence="17 20" type="primary">ZRANB3</name>
</gene>
<name>ZRAB3_HUMAN</name>
<organism>
    <name type="scientific">Homo sapiens</name>
    <name type="common">Human</name>
    <dbReference type="NCBI Taxonomy" id="9606"/>
    <lineage>
        <taxon>Eukaryota</taxon>
        <taxon>Metazoa</taxon>
        <taxon>Chordata</taxon>
        <taxon>Craniata</taxon>
        <taxon>Vertebrata</taxon>
        <taxon>Euteleostomi</taxon>
        <taxon>Mammalia</taxon>
        <taxon>Eutheria</taxon>
        <taxon>Euarchontoglires</taxon>
        <taxon>Primates</taxon>
        <taxon>Haplorrhini</taxon>
        <taxon>Catarrhini</taxon>
        <taxon>Hominidae</taxon>
        <taxon>Homo</taxon>
    </lineage>
</organism>
<dbReference type="EC" id="3.6.4.-" evidence="6 7"/>
<dbReference type="EC" id="3.1.-.-" evidence="8"/>
<dbReference type="EMBL" id="AL136824">
    <property type="protein sequence ID" value="CAB66758.1"/>
    <property type="molecule type" value="mRNA"/>
</dbReference>
<dbReference type="EMBL" id="AK095362">
    <property type="protein sequence ID" value="BAC04536.1"/>
    <property type="molecule type" value="mRNA"/>
</dbReference>
<dbReference type="EMBL" id="AK131303">
    <property type="protein sequence ID" value="BAG54763.1"/>
    <property type="status" value="ALT_INIT"/>
    <property type="molecule type" value="mRNA"/>
</dbReference>
<dbReference type="EMBL" id="AK304601">
    <property type="protein sequence ID" value="BAG65387.1"/>
    <property type="status" value="ALT_INIT"/>
    <property type="molecule type" value="mRNA"/>
</dbReference>
<dbReference type="EMBL" id="BX647838">
    <property type="status" value="NOT_ANNOTATED_CDS"/>
    <property type="molecule type" value="mRNA"/>
</dbReference>
<dbReference type="EMBL" id="AC012450">
    <property type="status" value="NOT_ANNOTATED_CDS"/>
    <property type="molecule type" value="Genomic_DNA"/>
</dbReference>
<dbReference type="EMBL" id="AC016742">
    <property type="status" value="NOT_ANNOTATED_CDS"/>
    <property type="molecule type" value="Genomic_DNA"/>
</dbReference>
<dbReference type="EMBL" id="AC017031">
    <property type="protein sequence ID" value="AAX93066.1"/>
    <property type="status" value="ALT_SEQ"/>
    <property type="molecule type" value="Genomic_DNA"/>
</dbReference>
<dbReference type="EMBL" id="AC020602">
    <property type="status" value="NOT_ANNOTATED_CDS"/>
    <property type="molecule type" value="Genomic_DNA"/>
</dbReference>
<dbReference type="EMBL" id="AC064850">
    <property type="status" value="NOT_ANNOTATED_CDS"/>
    <property type="molecule type" value="Genomic_DNA"/>
</dbReference>
<dbReference type="EMBL" id="CH471058">
    <property type="protein sequence ID" value="EAX11631.1"/>
    <property type="status" value="ALT_SEQ"/>
    <property type="molecule type" value="Genomic_DNA"/>
</dbReference>
<dbReference type="EMBL" id="CH471058">
    <property type="protein sequence ID" value="EAX11633.1"/>
    <property type="status" value="ALT_SEQ"/>
    <property type="molecule type" value="Genomic_DNA"/>
</dbReference>
<dbReference type="EMBL" id="BC064616">
    <property type="protein sequence ID" value="AAH64616.1"/>
    <property type="molecule type" value="mRNA"/>
</dbReference>
<dbReference type="EMBL" id="BC089429">
    <property type="protein sequence ID" value="AAH89429.2"/>
    <property type="molecule type" value="mRNA"/>
</dbReference>
<dbReference type="CCDS" id="CCDS46419.1">
    <molecule id="Q5FWF4-1"/>
</dbReference>
<dbReference type="CCDS" id="CCDS67963.1">
    <molecule id="Q5FWF4-3"/>
</dbReference>
<dbReference type="RefSeq" id="NP_001273497.1">
    <molecule id="Q5FWF4-3"/>
    <property type="nucleotide sequence ID" value="NM_001286568.2"/>
</dbReference>
<dbReference type="RefSeq" id="NP_115519.2">
    <molecule id="Q5FWF4-1"/>
    <property type="nucleotide sequence ID" value="NM_032143.4"/>
</dbReference>
<dbReference type="RefSeq" id="XP_005263866.1">
    <property type="nucleotide sequence ID" value="XM_005263809.1"/>
</dbReference>
<dbReference type="RefSeq" id="XP_006712851.1">
    <property type="nucleotide sequence ID" value="XM_006712788.1"/>
</dbReference>
<dbReference type="RefSeq" id="XP_011510260.1">
    <property type="nucleotide sequence ID" value="XM_011511958.2"/>
</dbReference>
<dbReference type="RefSeq" id="XP_011510262.1">
    <property type="nucleotide sequence ID" value="XM_011511960.1"/>
</dbReference>
<dbReference type="RefSeq" id="XP_011510265.1">
    <property type="nucleotide sequence ID" value="XM_011511963.1"/>
</dbReference>
<dbReference type="PDB" id="5MKW">
    <property type="method" value="X-ray"/>
    <property type="resolution" value="2.00 A"/>
    <property type="chains" value="A/B=948-1067"/>
</dbReference>
<dbReference type="PDB" id="5MLO">
    <property type="method" value="X-ray"/>
    <property type="resolution" value="1.96 A"/>
    <property type="chains" value="B/D/F=515-529"/>
</dbReference>
<dbReference type="PDB" id="5MLW">
    <property type="method" value="X-ray"/>
    <property type="resolution" value="2.45 A"/>
    <property type="chains" value="B/D/F=1069-1079"/>
</dbReference>
<dbReference type="PDB" id="5YD8">
    <property type="method" value="X-ray"/>
    <property type="resolution" value="2.30 A"/>
    <property type="chains" value="U/V/W=1069-1079"/>
</dbReference>
<dbReference type="PDBsum" id="5MKW"/>
<dbReference type="PDBsum" id="5MLO"/>
<dbReference type="PDBsum" id="5MLW"/>
<dbReference type="PDBsum" id="5YD8"/>
<dbReference type="SMR" id="Q5FWF4"/>
<dbReference type="BioGRID" id="123877">
    <property type="interactions" value="34"/>
</dbReference>
<dbReference type="FunCoup" id="Q5FWF4">
    <property type="interactions" value="1305"/>
</dbReference>
<dbReference type="IntAct" id="Q5FWF4">
    <property type="interactions" value="26"/>
</dbReference>
<dbReference type="STRING" id="9606.ENSP00000264159"/>
<dbReference type="iPTMnet" id="Q5FWF4"/>
<dbReference type="PhosphoSitePlus" id="Q5FWF4"/>
<dbReference type="BioMuta" id="ZRANB3"/>
<dbReference type="DMDM" id="74741477"/>
<dbReference type="jPOST" id="Q5FWF4"/>
<dbReference type="MassIVE" id="Q5FWF4"/>
<dbReference type="PaxDb" id="9606-ENSP00000264159"/>
<dbReference type="PeptideAtlas" id="Q5FWF4"/>
<dbReference type="ProteomicsDB" id="19263"/>
<dbReference type="ProteomicsDB" id="62811">
    <molecule id="Q5FWF4-1"/>
</dbReference>
<dbReference type="ProteomicsDB" id="62812">
    <molecule id="Q5FWF4-2"/>
</dbReference>
<dbReference type="ProteomicsDB" id="62813">
    <molecule id="Q5FWF4-3"/>
</dbReference>
<dbReference type="Pumba" id="Q5FWF4"/>
<dbReference type="Antibodypedia" id="56175">
    <property type="antibodies" value="70 antibodies from 18 providers"/>
</dbReference>
<dbReference type="DNASU" id="84083"/>
<dbReference type="Ensembl" id="ENST00000264159.11">
    <molecule id="Q5FWF4-1"/>
    <property type="protein sequence ID" value="ENSP00000264159.6"/>
    <property type="gene ID" value="ENSG00000121988.18"/>
</dbReference>
<dbReference type="Ensembl" id="ENST00000401392.5">
    <molecule id="Q5FWF4-3"/>
    <property type="protein sequence ID" value="ENSP00000383979.1"/>
    <property type="gene ID" value="ENSG00000121988.18"/>
</dbReference>
<dbReference type="Ensembl" id="ENST00000619650.4">
    <molecule id="Q5FWF4-2"/>
    <property type="protein sequence ID" value="ENSP00000480120.1"/>
    <property type="gene ID" value="ENSG00000121988.18"/>
</dbReference>
<dbReference type="GeneID" id="84083"/>
<dbReference type="KEGG" id="hsa:84083"/>
<dbReference type="MANE-Select" id="ENST00000264159.11">
    <property type="protein sequence ID" value="ENSP00000264159.6"/>
    <property type="RefSeq nucleotide sequence ID" value="NM_032143.4"/>
    <property type="RefSeq protein sequence ID" value="NP_115519.2"/>
</dbReference>
<dbReference type="UCSC" id="uc002tul.5">
    <molecule id="Q5FWF4-1"/>
    <property type="organism name" value="human"/>
</dbReference>
<dbReference type="AGR" id="HGNC:25249"/>
<dbReference type="CTD" id="84083"/>
<dbReference type="DisGeNET" id="84083"/>
<dbReference type="GeneCards" id="ZRANB3"/>
<dbReference type="HGNC" id="HGNC:25249">
    <property type="gene designation" value="ZRANB3"/>
</dbReference>
<dbReference type="HPA" id="ENSG00000121988">
    <property type="expression patterns" value="Low tissue specificity"/>
</dbReference>
<dbReference type="MIM" id="615655">
    <property type="type" value="gene"/>
</dbReference>
<dbReference type="neXtProt" id="NX_Q5FWF4"/>
<dbReference type="OpenTargets" id="ENSG00000121988"/>
<dbReference type="PharmGKB" id="PA134871612"/>
<dbReference type="VEuPathDB" id="HostDB:ENSG00000121988"/>
<dbReference type="eggNOG" id="KOG1000">
    <property type="taxonomic scope" value="Eukaryota"/>
</dbReference>
<dbReference type="GeneTree" id="ENSGT00940000158559"/>
<dbReference type="HOGENOM" id="CLU_004251_0_0_1"/>
<dbReference type="InParanoid" id="Q5FWF4"/>
<dbReference type="OMA" id="WRKVVLH"/>
<dbReference type="OrthoDB" id="2801544at2759"/>
<dbReference type="PAN-GO" id="Q5FWF4">
    <property type="GO annotations" value="5 GO annotations based on evolutionary models"/>
</dbReference>
<dbReference type="PhylomeDB" id="Q5FWF4"/>
<dbReference type="TreeFam" id="TF354227"/>
<dbReference type="PathwayCommons" id="Q5FWF4"/>
<dbReference type="SignaLink" id="Q5FWF4"/>
<dbReference type="BioGRID-ORCS" id="84083">
    <property type="hits" value="15 hits in 1159 CRISPR screens"/>
</dbReference>
<dbReference type="ChiTaRS" id="ZRANB3">
    <property type="organism name" value="human"/>
</dbReference>
<dbReference type="GenomeRNAi" id="84083"/>
<dbReference type="Pharos" id="Q5FWF4">
    <property type="development level" value="Tbio"/>
</dbReference>
<dbReference type="PRO" id="PR:Q5FWF4"/>
<dbReference type="Proteomes" id="UP000005640">
    <property type="component" value="Chromosome 2"/>
</dbReference>
<dbReference type="RNAct" id="Q5FWF4">
    <property type="molecule type" value="protein"/>
</dbReference>
<dbReference type="Bgee" id="ENSG00000121988">
    <property type="expression patterns" value="Expressed in primordial germ cell in gonad and 142 other cell types or tissues"/>
</dbReference>
<dbReference type="ExpressionAtlas" id="Q5FWF4">
    <property type="expression patterns" value="baseline and differential"/>
</dbReference>
<dbReference type="GO" id="GO:0043596">
    <property type="term" value="C:nuclear replication fork"/>
    <property type="evidence" value="ECO:0000314"/>
    <property type="project" value="UniProtKB"/>
</dbReference>
<dbReference type="GO" id="GO:0005654">
    <property type="term" value="C:nucleoplasm"/>
    <property type="evidence" value="ECO:0000314"/>
    <property type="project" value="HPA"/>
</dbReference>
<dbReference type="GO" id="GO:0005524">
    <property type="term" value="F:ATP binding"/>
    <property type="evidence" value="ECO:0007669"/>
    <property type="project" value="UniProtKB-KW"/>
</dbReference>
<dbReference type="GO" id="GO:0036310">
    <property type="term" value="F:ATP-dependent DNA/DNA annealing activity"/>
    <property type="evidence" value="ECO:0000314"/>
    <property type="project" value="UniProtKB"/>
</dbReference>
<dbReference type="GO" id="GO:0004520">
    <property type="term" value="F:DNA endonuclease activity"/>
    <property type="evidence" value="ECO:0000314"/>
    <property type="project" value="UniProtKB"/>
</dbReference>
<dbReference type="GO" id="GO:0004386">
    <property type="term" value="F:helicase activity"/>
    <property type="evidence" value="ECO:0007669"/>
    <property type="project" value="UniProtKB-KW"/>
</dbReference>
<dbReference type="GO" id="GO:0070530">
    <property type="term" value="F:K63-linked polyubiquitin modification-dependent protein binding"/>
    <property type="evidence" value="ECO:0000314"/>
    <property type="project" value="UniProtKB"/>
</dbReference>
<dbReference type="GO" id="GO:0008270">
    <property type="term" value="F:zinc ion binding"/>
    <property type="evidence" value="ECO:0007669"/>
    <property type="project" value="UniProtKB-KW"/>
</dbReference>
<dbReference type="GO" id="GO:0006974">
    <property type="term" value="P:DNA damage response"/>
    <property type="evidence" value="ECO:0000314"/>
    <property type="project" value="UniProtKB"/>
</dbReference>
<dbReference type="GO" id="GO:0006281">
    <property type="term" value="P:DNA repair"/>
    <property type="evidence" value="ECO:0000314"/>
    <property type="project" value="UniProtKB"/>
</dbReference>
<dbReference type="GO" id="GO:0031297">
    <property type="term" value="P:replication fork processing"/>
    <property type="evidence" value="ECO:0000314"/>
    <property type="project" value="UniProtKB"/>
</dbReference>
<dbReference type="GO" id="GO:0071932">
    <property type="term" value="P:replication fork reversal"/>
    <property type="evidence" value="ECO:0000314"/>
    <property type="project" value="UniProtKB"/>
</dbReference>
<dbReference type="GO" id="GO:0009411">
    <property type="term" value="P:response to UV"/>
    <property type="evidence" value="ECO:0000314"/>
    <property type="project" value="UniProtKB"/>
</dbReference>
<dbReference type="CDD" id="cd18010">
    <property type="entry name" value="DEXHc_HARP_SMARCAL1"/>
    <property type="match status" value="1"/>
</dbReference>
<dbReference type="CDD" id="cd00085">
    <property type="entry name" value="HNHc"/>
    <property type="match status" value="1"/>
</dbReference>
<dbReference type="CDD" id="cd18793">
    <property type="entry name" value="SF2_C_SNF"/>
    <property type="match status" value="1"/>
</dbReference>
<dbReference type="FunFam" id="3.40.50.10810:FF:000024">
    <property type="entry name" value="DNA annealing helicase and endonuclease ZRANB3"/>
    <property type="match status" value="1"/>
</dbReference>
<dbReference type="FunFam" id="3.40.50.300:FF:000788">
    <property type="entry name" value="DNA annealing helicase and endonuclease ZRANB3"/>
    <property type="match status" value="1"/>
</dbReference>
<dbReference type="FunFam" id="2.30.30.380:FF:000011">
    <property type="entry name" value="Zinc finger RANBP2-type containing 3"/>
    <property type="match status" value="1"/>
</dbReference>
<dbReference type="Gene3D" id="1.10.30.50">
    <property type="match status" value="1"/>
</dbReference>
<dbReference type="Gene3D" id="3.40.50.300">
    <property type="entry name" value="P-loop containing nucleotide triphosphate hydrolases"/>
    <property type="match status" value="1"/>
</dbReference>
<dbReference type="Gene3D" id="3.40.50.10810">
    <property type="entry name" value="Tandem AAA-ATPase domain"/>
    <property type="match status" value="1"/>
</dbReference>
<dbReference type="Gene3D" id="2.30.30.380">
    <property type="entry name" value="Zn-finger domain of Sec23/24"/>
    <property type="match status" value="1"/>
</dbReference>
<dbReference type="InterPro" id="IPR014001">
    <property type="entry name" value="Helicase_ATP-bd"/>
</dbReference>
<dbReference type="InterPro" id="IPR001650">
    <property type="entry name" value="Helicase_C-like"/>
</dbReference>
<dbReference type="InterPro" id="IPR002711">
    <property type="entry name" value="HNH"/>
</dbReference>
<dbReference type="InterPro" id="IPR003615">
    <property type="entry name" value="HNH_nuc"/>
</dbReference>
<dbReference type="InterPro" id="IPR027417">
    <property type="entry name" value="P-loop_NTPase"/>
</dbReference>
<dbReference type="InterPro" id="IPR038718">
    <property type="entry name" value="SNF2-like_sf"/>
</dbReference>
<dbReference type="InterPro" id="IPR049730">
    <property type="entry name" value="SNF2/RAD54-like_C"/>
</dbReference>
<dbReference type="InterPro" id="IPR000330">
    <property type="entry name" value="SNF2_N"/>
</dbReference>
<dbReference type="InterPro" id="IPR001876">
    <property type="entry name" value="Znf_RanBP2"/>
</dbReference>
<dbReference type="InterPro" id="IPR036443">
    <property type="entry name" value="Znf_RanBP2_sf"/>
</dbReference>
<dbReference type="PANTHER" id="PTHR45766:SF3">
    <property type="entry name" value="DNA ANNEALING HELICASE AND ENDONUCLEASE ZRANB3"/>
    <property type="match status" value="1"/>
</dbReference>
<dbReference type="PANTHER" id="PTHR45766">
    <property type="entry name" value="DNA ANNEALING HELICASE AND ENDONUCLEASE ZRANB3 FAMILY MEMBER"/>
    <property type="match status" value="1"/>
</dbReference>
<dbReference type="Pfam" id="PF00271">
    <property type="entry name" value="Helicase_C"/>
    <property type="match status" value="1"/>
</dbReference>
<dbReference type="Pfam" id="PF01844">
    <property type="entry name" value="HNH"/>
    <property type="match status" value="1"/>
</dbReference>
<dbReference type="Pfam" id="PF00176">
    <property type="entry name" value="SNF2-rel_dom"/>
    <property type="match status" value="1"/>
</dbReference>
<dbReference type="Pfam" id="PF00641">
    <property type="entry name" value="Zn_ribbon_RanBP"/>
    <property type="match status" value="1"/>
</dbReference>
<dbReference type="SMART" id="SM00487">
    <property type="entry name" value="DEXDc"/>
    <property type="match status" value="1"/>
</dbReference>
<dbReference type="SMART" id="SM00490">
    <property type="entry name" value="HELICc"/>
    <property type="match status" value="1"/>
</dbReference>
<dbReference type="SMART" id="SM00507">
    <property type="entry name" value="HNHc"/>
    <property type="match status" value="1"/>
</dbReference>
<dbReference type="SMART" id="SM00547">
    <property type="entry name" value="ZnF_RBZ"/>
    <property type="match status" value="1"/>
</dbReference>
<dbReference type="SUPFAM" id="SSF52540">
    <property type="entry name" value="P-loop containing nucleoside triphosphate hydrolases"/>
    <property type="match status" value="2"/>
</dbReference>
<dbReference type="SUPFAM" id="SSF90209">
    <property type="entry name" value="Ran binding protein zinc finger-like"/>
    <property type="match status" value="1"/>
</dbReference>
<dbReference type="PROSITE" id="PS51192">
    <property type="entry name" value="HELICASE_ATP_BIND_1"/>
    <property type="match status" value="1"/>
</dbReference>
<dbReference type="PROSITE" id="PS51194">
    <property type="entry name" value="HELICASE_CTER"/>
    <property type="match status" value="1"/>
</dbReference>
<dbReference type="PROSITE" id="PS01358">
    <property type="entry name" value="ZF_RANBP2_1"/>
    <property type="match status" value="1"/>
</dbReference>
<dbReference type="PROSITE" id="PS50199">
    <property type="entry name" value="ZF_RANBP2_2"/>
    <property type="match status" value="1"/>
</dbReference>
<proteinExistence type="evidence at protein level"/>
<accession>Q5FWF4</accession>
<accession>B3KYA1</accession>
<accession>B4E375</accession>
<accession>B5MDI3</accession>
<accession>D3DP76</accession>
<accession>E9PBP0</accession>
<accession>Q53SM1</accession>
<accession>Q6P2C4</accession>
<accession>Q8N1P4</accession>
<accession>Q9H0E8</accession>
<keyword id="KW-0002">3D-structure</keyword>
<keyword id="KW-0025">Alternative splicing</keyword>
<keyword id="KW-0067">ATP-binding</keyword>
<keyword id="KW-0158">Chromosome</keyword>
<keyword id="KW-0227">DNA damage</keyword>
<keyword id="KW-0234">DNA repair</keyword>
<keyword id="KW-0255">Endonuclease</keyword>
<keyword id="KW-0347">Helicase</keyword>
<keyword id="KW-0378">Hydrolase</keyword>
<keyword id="KW-0479">Metal-binding</keyword>
<keyword id="KW-0488">Methylation</keyword>
<keyword id="KW-0511">Multifunctional enzyme</keyword>
<keyword id="KW-0540">Nuclease</keyword>
<keyword id="KW-0547">Nucleotide-binding</keyword>
<keyword id="KW-0539">Nucleus</keyword>
<keyword id="KW-0597">Phosphoprotein</keyword>
<keyword id="KW-1267">Proteomics identification</keyword>
<keyword id="KW-1185">Reference proteome</keyword>
<keyword id="KW-0862">Zinc</keyword>
<keyword id="KW-0863">Zinc-finger</keyword>
<reference key="1">
    <citation type="journal article" date="2001" name="Genome Res.">
        <title>Towards a catalog of human genes and proteins: sequencing and analysis of 500 novel complete protein coding human cDNAs.</title>
        <authorList>
            <person name="Wiemann S."/>
            <person name="Weil B."/>
            <person name="Wellenreuther R."/>
            <person name="Gassenhuber J."/>
            <person name="Glassl S."/>
            <person name="Ansorge W."/>
            <person name="Boecher M."/>
            <person name="Bloecker H."/>
            <person name="Bauersachs S."/>
            <person name="Blum H."/>
            <person name="Lauber J."/>
            <person name="Duesterhoeft A."/>
            <person name="Beyer A."/>
            <person name="Koehrer K."/>
            <person name="Strack N."/>
            <person name="Mewes H.-W."/>
            <person name="Ottenwaelder B."/>
            <person name="Obermaier B."/>
            <person name="Tampe J."/>
            <person name="Heubner D."/>
            <person name="Wambutt R."/>
            <person name="Korn B."/>
            <person name="Klein M."/>
            <person name="Poustka A."/>
        </authorList>
    </citation>
    <scope>NUCLEOTIDE SEQUENCE [LARGE SCALE MRNA] (ISOFORM 2)</scope>
    <source>
        <tissue>Testis</tissue>
    </source>
</reference>
<reference key="2">
    <citation type="journal article" date="2004" name="Nat. Genet.">
        <title>Complete sequencing and characterization of 21,243 full-length human cDNAs.</title>
        <authorList>
            <person name="Ota T."/>
            <person name="Suzuki Y."/>
            <person name="Nishikawa T."/>
            <person name="Otsuki T."/>
            <person name="Sugiyama T."/>
            <person name="Irie R."/>
            <person name="Wakamatsu A."/>
            <person name="Hayashi K."/>
            <person name="Sato H."/>
            <person name="Nagai K."/>
            <person name="Kimura K."/>
            <person name="Makita H."/>
            <person name="Sekine M."/>
            <person name="Obayashi M."/>
            <person name="Nishi T."/>
            <person name="Shibahara T."/>
            <person name="Tanaka T."/>
            <person name="Ishii S."/>
            <person name="Yamamoto J."/>
            <person name="Saito K."/>
            <person name="Kawai Y."/>
            <person name="Isono Y."/>
            <person name="Nakamura Y."/>
            <person name="Nagahari K."/>
            <person name="Murakami K."/>
            <person name="Yasuda T."/>
            <person name="Iwayanagi T."/>
            <person name="Wagatsuma M."/>
            <person name="Shiratori A."/>
            <person name="Sudo H."/>
            <person name="Hosoiri T."/>
            <person name="Kaku Y."/>
            <person name="Kodaira H."/>
            <person name="Kondo H."/>
            <person name="Sugawara M."/>
            <person name="Takahashi M."/>
            <person name="Kanda K."/>
            <person name="Yokoi T."/>
            <person name="Furuya T."/>
            <person name="Kikkawa E."/>
            <person name="Omura Y."/>
            <person name="Abe K."/>
            <person name="Kamihara K."/>
            <person name="Katsuta N."/>
            <person name="Sato K."/>
            <person name="Tanikawa M."/>
            <person name="Yamazaki M."/>
            <person name="Ninomiya K."/>
            <person name="Ishibashi T."/>
            <person name="Yamashita H."/>
            <person name="Murakawa K."/>
            <person name="Fujimori K."/>
            <person name="Tanai H."/>
            <person name="Kimata M."/>
            <person name="Watanabe M."/>
            <person name="Hiraoka S."/>
            <person name="Chiba Y."/>
            <person name="Ishida S."/>
            <person name="Ono Y."/>
            <person name="Takiguchi S."/>
            <person name="Watanabe S."/>
            <person name="Yosida M."/>
            <person name="Hotuta T."/>
            <person name="Kusano J."/>
            <person name="Kanehori K."/>
            <person name="Takahashi-Fujii A."/>
            <person name="Hara H."/>
            <person name="Tanase T.-O."/>
            <person name="Nomura Y."/>
            <person name="Togiya S."/>
            <person name="Komai F."/>
            <person name="Hara R."/>
            <person name="Takeuchi K."/>
            <person name="Arita M."/>
            <person name="Imose N."/>
            <person name="Musashino K."/>
            <person name="Yuuki H."/>
            <person name="Oshima A."/>
            <person name="Sasaki N."/>
            <person name="Aotsuka S."/>
            <person name="Yoshikawa Y."/>
            <person name="Matsunawa H."/>
            <person name="Ichihara T."/>
            <person name="Shiohata N."/>
            <person name="Sano S."/>
            <person name="Moriya S."/>
            <person name="Momiyama H."/>
            <person name="Satoh N."/>
            <person name="Takami S."/>
            <person name="Terashima Y."/>
            <person name="Suzuki O."/>
            <person name="Nakagawa S."/>
            <person name="Senoh A."/>
            <person name="Mizoguchi H."/>
            <person name="Goto Y."/>
            <person name="Shimizu F."/>
            <person name="Wakebe H."/>
            <person name="Hishigaki H."/>
            <person name="Watanabe T."/>
            <person name="Sugiyama A."/>
            <person name="Takemoto M."/>
            <person name="Kawakami B."/>
            <person name="Yamazaki M."/>
            <person name="Watanabe K."/>
            <person name="Kumagai A."/>
            <person name="Itakura S."/>
            <person name="Fukuzumi Y."/>
            <person name="Fujimori Y."/>
            <person name="Komiyama M."/>
            <person name="Tashiro H."/>
            <person name="Tanigami A."/>
            <person name="Fujiwara T."/>
            <person name="Ono T."/>
            <person name="Yamada K."/>
            <person name="Fujii Y."/>
            <person name="Ozaki K."/>
            <person name="Hirao M."/>
            <person name="Ohmori Y."/>
            <person name="Kawabata A."/>
            <person name="Hikiji T."/>
            <person name="Kobatake N."/>
            <person name="Inagaki H."/>
            <person name="Ikema Y."/>
            <person name="Okamoto S."/>
            <person name="Okitani R."/>
            <person name="Kawakami T."/>
            <person name="Noguchi S."/>
            <person name="Itoh T."/>
            <person name="Shigeta K."/>
            <person name="Senba T."/>
            <person name="Matsumura K."/>
            <person name="Nakajima Y."/>
            <person name="Mizuno T."/>
            <person name="Morinaga M."/>
            <person name="Sasaki M."/>
            <person name="Togashi T."/>
            <person name="Oyama M."/>
            <person name="Hata H."/>
            <person name="Watanabe M."/>
            <person name="Komatsu T."/>
            <person name="Mizushima-Sugano J."/>
            <person name="Satoh T."/>
            <person name="Shirai Y."/>
            <person name="Takahashi Y."/>
            <person name="Nakagawa K."/>
            <person name="Okumura K."/>
            <person name="Nagase T."/>
            <person name="Nomura N."/>
            <person name="Kikuchi H."/>
            <person name="Masuho Y."/>
            <person name="Yamashita R."/>
            <person name="Nakai K."/>
            <person name="Yada T."/>
            <person name="Nakamura Y."/>
            <person name="Ohara O."/>
            <person name="Isogai T."/>
            <person name="Sugano S."/>
        </authorList>
    </citation>
    <scope>NUCLEOTIDE SEQUENCE [LARGE SCALE MRNA] (ISOFORM 5)</scope>
    <scope>NUCLEOTIDE SEQUENCE [LARGE SCALE MRNA] OF 248-1079 (ISOFORM 1)</scope>
    <source>
        <tissue>Teratocarcinoma</tissue>
        <tissue>Tongue</tissue>
        <tissue>Uterus</tissue>
    </source>
</reference>
<reference key="3">
    <citation type="journal article" date="2007" name="BMC Genomics">
        <title>The full-ORF clone resource of the German cDNA consortium.</title>
        <authorList>
            <person name="Bechtel S."/>
            <person name="Rosenfelder H."/>
            <person name="Duda A."/>
            <person name="Schmidt C.P."/>
            <person name="Ernst U."/>
            <person name="Wellenreuther R."/>
            <person name="Mehrle A."/>
            <person name="Schuster C."/>
            <person name="Bahr A."/>
            <person name="Bloecker H."/>
            <person name="Heubner D."/>
            <person name="Hoerlein A."/>
            <person name="Michel G."/>
            <person name="Wedler H."/>
            <person name="Koehrer K."/>
            <person name="Ottenwaelder B."/>
            <person name="Poustka A."/>
            <person name="Wiemann S."/>
            <person name="Schupp I."/>
        </authorList>
    </citation>
    <scope>NUCLEOTIDE SEQUENCE [LARGE SCALE MRNA] (ISOFORM 3)</scope>
    <source>
        <tissue>Endometrium</tissue>
    </source>
</reference>
<reference key="4">
    <citation type="journal article" date="2005" name="Nature">
        <title>Generation and annotation of the DNA sequences of human chromosomes 2 and 4.</title>
        <authorList>
            <person name="Hillier L.W."/>
            <person name="Graves T.A."/>
            <person name="Fulton R.S."/>
            <person name="Fulton L.A."/>
            <person name="Pepin K.H."/>
            <person name="Minx P."/>
            <person name="Wagner-McPherson C."/>
            <person name="Layman D."/>
            <person name="Wylie K."/>
            <person name="Sekhon M."/>
            <person name="Becker M.C."/>
            <person name="Fewell G.A."/>
            <person name="Delehaunty K.D."/>
            <person name="Miner T.L."/>
            <person name="Nash W.E."/>
            <person name="Kremitzki C."/>
            <person name="Oddy L."/>
            <person name="Du H."/>
            <person name="Sun H."/>
            <person name="Bradshaw-Cordum H."/>
            <person name="Ali J."/>
            <person name="Carter J."/>
            <person name="Cordes M."/>
            <person name="Harris A."/>
            <person name="Isak A."/>
            <person name="van Brunt A."/>
            <person name="Nguyen C."/>
            <person name="Du F."/>
            <person name="Courtney L."/>
            <person name="Kalicki J."/>
            <person name="Ozersky P."/>
            <person name="Abbott S."/>
            <person name="Armstrong J."/>
            <person name="Belter E.A."/>
            <person name="Caruso L."/>
            <person name="Cedroni M."/>
            <person name="Cotton M."/>
            <person name="Davidson T."/>
            <person name="Desai A."/>
            <person name="Elliott G."/>
            <person name="Erb T."/>
            <person name="Fronick C."/>
            <person name="Gaige T."/>
            <person name="Haakenson W."/>
            <person name="Haglund K."/>
            <person name="Holmes A."/>
            <person name="Harkins R."/>
            <person name="Kim K."/>
            <person name="Kruchowski S.S."/>
            <person name="Strong C.M."/>
            <person name="Grewal N."/>
            <person name="Goyea E."/>
            <person name="Hou S."/>
            <person name="Levy A."/>
            <person name="Martinka S."/>
            <person name="Mead K."/>
            <person name="McLellan M.D."/>
            <person name="Meyer R."/>
            <person name="Randall-Maher J."/>
            <person name="Tomlinson C."/>
            <person name="Dauphin-Kohlberg S."/>
            <person name="Kozlowicz-Reilly A."/>
            <person name="Shah N."/>
            <person name="Swearengen-Shahid S."/>
            <person name="Snider J."/>
            <person name="Strong J.T."/>
            <person name="Thompson J."/>
            <person name="Yoakum M."/>
            <person name="Leonard S."/>
            <person name="Pearman C."/>
            <person name="Trani L."/>
            <person name="Radionenko M."/>
            <person name="Waligorski J.E."/>
            <person name="Wang C."/>
            <person name="Rock S.M."/>
            <person name="Tin-Wollam A.-M."/>
            <person name="Maupin R."/>
            <person name="Latreille P."/>
            <person name="Wendl M.C."/>
            <person name="Yang S.-P."/>
            <person name="Pohl C."/>
            <person name="Wallis J.W."/>
            <person name="Spieth J."/>
            <person name="Bieri T.A."/>
            <person name="Berkowicz N."/>
            <person name="Nelson J.O."/>
            <person name="Osborne J."/>
            <person name="Ding L."/>
            <person name="Meyer R."/>
            <person name="Sabo A."/>
            <person name="Shotland Y."/>
            <person name="Sinha P."/>
            <person name="Wohldmann P.E."/>
            <person name="Cook L.L."/>
            <person name="Hickenbotham M.T."/>
            <person name="Eldred J."/>
            <person name="Williams D."/>
            <person name="Jones T.A."/>
            <person name="She X."/>
            <person name="Ciccarelli F.D."/>
            <person name="Izaurralde E."/>
            <person name="Taylor J."/>
            <person name="Schmutz J."/>
            <person name="Myers R.M."/>
            <person name="Cox D.R."/>
            <person name="Huang X."/>
            <person name="McPherson J.D."/>
            <person name="Mardis E.R."/>
            <person name="Clifton S.W."/>
            <person name="Warren W.C."/>
            <person name="Chinwalla A.T."/>
            <person name="Eddy S.R."/>
            <person name="Marra M.A."/>
            <person name="Ovcharenko I."/>
            <person name="Furey T.S."/>
            <person name="Miller W."/>
            <person name="Eichler E.E."/>
            <person name="Bork P."/>
            <person name="Suyama M."/>
            <person name="Torrents D."/>
            <person name="Waterston R.H."/>
            <person name="Wilson R.K."/>
        </authorList>
    </citation>
    <scope>NUCLEOTIDE SEQUENCE [LARGE SCALE GENOMIC DNA]</scope>
</reference>
<reference key="5">
    <citation type="submission" date="2005-09" db="EMBL/GenBank/DDBJ databases">
        <authorList>
            <person name="Mural R.J."/>
            <person name="Istrail S."/>
            <person name="Sutton G.G."/>
            <person name="Florea L."/>
            <person name="Halpern A.L."/>
            <person name="Mobarry C.M."/>
            <person name="Lippert R."/>
            <person name="Walenz B."/>
            <person name="Shatkay H."/>
            <person name="Dew I."/>
            <person name="Miller J.R."/>
            <person name="Flanigan M.J."/>
            <person name="Edwards N.J."/>
            <person name="Bolanos R."/>
            <person name="Fasulo D."/>
            <person name="Halldorsson B.V."/>
            <person name="Hannenhalli S."/>
            <person name="Turner R."/>
            <person name="Yooseph S."/>
            <person name="Lu F."/>
            <person name="Nusskern D.R."/>
            <person name="Shue B.C."/>
            <person name="Zheng X.H."/>
            <person name="Zhong F."/>
            <person name="Delcher A.L."/>
            <person name="Huson D.H."/>
            <person name="Kravitz S.A."/>
            <person name="Mouchard L."/>
            <person name="Reinert K."/>
            <person name="Remington K.A."/>
            <person name="Clark A.G."/>
            <person name="Waterman M.S."/>
            <person name="Eichler E.E."/>
            <person name="Adams M.D."/>
            <person name="Hunkapiller M.W."/>
            <person name="Myers E.W."/>
            <person name="Venter J.C."/>
        </authorList>
    </citation>
    <scope>NUCLEOTIDE SEQUENCE [LARGE SCALE GENOMIC DNA]</scope>
</reference>
<reference key="6">
    <citation type="journal article" date="2004" name="Genome Res.">
        <title>The status, quality, and expansion of the NIH full-length cDNA project: the Mammalian Gene Collection (MGC).</title>
        <authorList>
            <consortium name="The MGC Project Team"/>
        </authorList>
    </citation>
    <scope>NUCLEOTIDE SEQUENCE [LARGE SCALE MRNA] (ISOFORMS 1 AND 4)</scope>
    <source>
        <tissue>Lymph</tissue>
        <tissue>Testis</tissue>
    </source>
</reference>
<reference key="7">
    <citation type="journal article" date="2009" name="Sci. Signal.">
        <title>Quantitative phosphoproteomic analysis of T cell receptor signaling reveals system-wide modulation of protein-protein interactions.</title>
        <authorList>
            <person name="Mayya V."/>
            <person name="Lundgren D.H."/>
            <person name="Hwang S.-I."/>
            <person name="Rezaul K."/>
            <person name="Wu L."/>
            <person name="Eng J.K."/>
            <person name="Rodionov V."/>
            <person name="Han D.K."/>
        </authorList>
    </citation>
    <scope>IDENTIFICATION BY MASS SPECTROMETRY [LARGE SCALE ANALYSIS]</scope>
    <source>
        <tissue>Leukemic T-cell</tissue>
    </source>
</reference>
<reference key="8">
    <citation type="journal article" date="2010" name="Proc. Natl. Acad. Sci. U.S.A.">
        <title>Annealing helicase 2 (AH2), a DNA-rewinding motor with an HNH motif.</title>
        <authorList>
            <person name="Yusufzai T."/>
            <person name="Kadonaga J.T."/>
        </authorList>
    </citation>
    <scope>FUNCTION</scope>
</reference>
<reference key="9">
    <citation type="journal article" date="2012" name="Genes Dev.">
        <title>ZRANB3 is a structure-specific ATP-dependent endonuclease involved in replication stress response.</title>
        <authorList>
            <person name="Weston R."/>
            <person name="Peeters H."/>
            <person name="Ahel D."/>
        </authorList>
    </citation>
    <scope>FUNCTION AS ENDONUCLEASE</scope>
    <scope>SUBCELLULAR LOCATION</scope>
    <scope>INTERACTION WITH PCNA</scope>
    <scope>DOMAIN</scope>
    <scope>MUTAGENESIS OF LYS-65; GLN-519; 525-PHE-PHE-526; TRP-625; THR-631; TYR-632; ASN-634; MET-643 AND HIS-1021</scope>
</reference>
<reference key="10">
    <citation type="journal article" date="2012" name="Mol. Cell">
        <title>The HARP-like domain-containing protein AH2/ZRANB3 binds to PCNA and participates in cellular response to replication stress.</title>
        <authorList>
            <person name="Yuan J."/>
            <person name="Ghosal G."/>
            <person name="Chen J."/>
        </authorList>
    </citation>
    <scope>FUNCTION AS ANNEALING HELICASE</scope>
    <scope>SUBCELLULAR LOCATION</scope>
    <scope>INTERACTION WITH PCNA</scope>
    <scope>DOMAIN</scope>
    <scope>MUTAGENESIS OF GLN-519 AND PHE-525</scope>
</reference>
<reference key="11">
    <citation type="journal article" date="2012" name="Mol. Cell">
        <title>Polyubiquitinated PCNA recruits the ZRANB3 translocase to maintain genomic integrity after replication stress.</title>
        <authorList>
            <person name="Ciccia A."/>
            <person name="Nimonkar A.V."/>
            <person name="Hu Y."/>
            <person name="Hajdu I."/>
            <person name="Achar Y.J."/>
            <person name="Izhar L."/>
            <person name="Petit S.A."/>
            <person name="Adamson B."/>
            <person name="Yoon J.C."/>
            <person name="Kowalczykowski S.C."/>
            <person name="Livingston D.M."/>
            <person name="Haracska L."/>
            <person name="Elledge S.J."/>
        </authorList>
    </citation>
    <scope>FUNCTION AS ANNEALING HELICASE</scope>
    <scope>SUBCELLULAR LOCATION</scope>
    <scope>INTERACTION WITH PCNA</scope>
    <scope>DOMAIN</scope>
    <scope>MUTAGENESIS OF 157-ASP-GLU-158; GLN-519; ILE-522; 525-PHE-PHE-526; 631-THR-TYR-631 AND PHE-1075</scope>
</reference>
<reference key="12">
    <citation type="journal article" date="2013" name="J. Proteome Res.">
        <title>Toward a comprehensive characterization of a human cancer cell phosphoproteome.</title>
        <authorList>
            <person name="Zhou H."/>
            <person name="Di Palma S."/>
            <person name="Preisinger C."/>
            <person name="Peng M."/>
            <person name="Polat A.N."/>
            <person name="Heck A.J."/>
            <person name="Mohammed S."/>
        </authorList>
    </citation>
    <scope>PHOSPHORYLATION [LARGE SCALE ANALYSIS] AT SER-569</scope>
    <scope>IDENTIFICATION BY MASS SPECTROMETRY [LARGE SCALE ANALYSIS]</scope>
    <source>
        <tissue>Cervix carcinoma</tissue>
    </source>
</reference>
<reference key="13">
    <citation type="journal article" date="2016" name="J. Biol. Chem.">
        <title>Identification of a substrate recognition domain in the replication stress response protein zinc finger Ran-binding domain-containing protein 3 (ZRANB3).</title>
        <authorList>
            <person name="Badu-Nkansah A."/>
            <person name="Mason A.C."/>
            <person name="Eichman B.F."/>
            <person name="Cortez D."/>
        </authorList>
    </citation>
    <scope>FUNCTION</scope>
    <scope>MUTAGENESIS OF LYS-163; 762-LEU--ILE-764 AND 792-TRP--SER-794</scope>
</reference>
<reference key="14">
    <citation type="journal article" date="2014" name="PLoS Pathog.">
        <title>Structure and specificity of the bacterial cysteine methyltransferase effector NleE suggests a novel substrate in human DNA repair pathway.</title>
        <authorList>
            <person name="Yao Q."/>
            <person name="Zhang L."/>
            <person name="Wan X."/>
            <person name="Chen J."/>
            <person name="Hu L."/>
            <person name="Ding X."/>
            <person name="Li L."/>
            <person name="Karar J."/>
            <person name="Peng H."/>
            <person name="Chen S."/>
            <person name="Huang N."/>
            <person name="Rauscher F.J. III"/>
            <person name="Shao F."/>
        </authorList>
    </citation>
    <scope>METHYLATION AT CYS-630 (MICROBIAL INFECTION)</scope>
</reference>
<reference key="15">
    <citation type="journal article" date="2016" name="J. Biol. Chem.">
        <title>Identification of a distinct substrate-binding domain in the bacterial cysteine methyltransferase effectors NleE and OspZ.</title>
        <authorList>
            <person name="Zhang Y."/>
            <person name="Muehlen S."/>
            <person name="Oates C.V."/>
            <person name="Pearson J.S."/>
            <person name="Hartland E.L."/>
        </authorList>
    </citation>
    <scope>METHYLATION (MICROBIAL INFECTION)</scope>
</reference>